<proteinExistence type="inferred from homology"/>
<keyword id="KW-0028">Amino-acid biosynthesis</keyword>
<keyword id="KW-0055">Arginine biosynthesis</keyword>
<keyword id="KW-0963">Cytoplasm</keyword>
<keyword id="KW-0808">Transferase</keyword>
<dbReference type="EC" id="2.1.3.3" evidence="2"/>
<dbReference type="EMBL" id="BX936398">
    <property type="protein sequence ID" value="CAH19766.1"/>
    <property type="molecule type" value="Genomic_DNA"/>
</dbReference>
<dbReference type="RefSeq" id="WP_011191651.1">
    <property type="nucleotide sequence ID" value="NC_006155.1"/>
</dbReference>
<dbReference type="SMR" id="Q66F14"/>
<dbReference type="GeneID" id="49787472"/>
<dbReference type="KEGG" id="ypo:BZ17_2036"/>
<dbReference type="KEGG" id="yps:YPTB0526"/>
<dbReference type="PATRIC" id="fig|273123.14.peg.2163"/>
<dbReference type="UniPathway" id="UPA00068">
    <property type="reaction ID" value="UER00112"/>
</dbReference>
<dbReference type="Proteomes" id="UP000001011">
    <property type="component" value="Chromosome"/>
</dbReference>
<dbReference type="GO" id="GO:0005737">
    <property type="term" value="C:cytoplasm"/>
    <property type="evidence" value="ECO:0007669"/>
    <property type="project" value="UniProtKB-SubCell"/>
</dbReference>
<dbReference type="GO" id="GO:0016597">
    <property type="term" value="F:amino acid binding"/>
    <property type="evidence" value="ECO:0007669"/>
    <property type="project" value="InterPro"/>
</dbReference>
<dbReference type="GO" id="GO:0004585">
    <property type="term" value="F:ornithine carbamoyltransferase activity"/>
    <property type="evidence" value="ECO:0007669"/>
    <property type="project" value="UniProtKB-UniRule"/>
</dbReference>
<dbReference type="GO" id="GO:0042450">
    <property type="term" value="P:arginine biosynthetic process via ornithine"/>
    <property type="evidence" value="ECO:0007669"/>
    <property type="project" value="TreeGrafter"/>
</dbReference>
<dbReference type="GO" id="GO:0019240">
    <property type="term" value="P:citrulline biosynthetic process"/>
    <property type="evidence" value="ECO:0007669"/>
    <property type="project" value="TreeGrafter"/>
</dbReference>
<dbReference type="GO" id="GO:0006526">
    <property type="term" value="P:L-arginine biosynthetic process"/>
    <property type="evidence" value="ECO:0007669"/>
    <property type="project" value="UniProtKB-UniRule"/>
</dbReference>
<dbReference type="FunFam" id="3.40.50.1370:FF:000004">
    <property type="entry name" value="Ornithine carbamoyltransferase"/>
    <property type="match status" value="1"/>
</dbReference>
<dbReference type="Gene3D" id="3.40.50.1370">
    <property type="entry name" value="Aspartate/ornithine carbamoyltransferase"/>
    <property type="match status" value="2"/>
</dbReference>
<dbReference type="HAMAP" id="MF_01109">
    <property type="entry name" value="OTCase"/>
    <property type="match status" value="1"/>
</dbReference>
<dbReference type="InterPro" id="IPR006132">
    <property type="entry name" value="Asp/Orn_carbamoyltranf_P-bd"/>
</dbReference>
<dbReference type="InterPro" id="IPR006130">
    <property type="entry name" value="Asp/Orn_carbamoylTrfase"/>
</dbReference>
<dbReference type="InterPro" id="IPR036901">
    <property type="entry name" value="Asp/Orn_carbamoylTrfase_sf"/>
</dbReference>
<dbReference type="InterPro" id="IPR006131">
    <property type="entry name" value="Asp_carbamoyltransf_Asp/Orn-bd"/>
</dbReference>
<dbReference type="InterPro" id="IPR002292">
    <property type="entry name" value="Orn/put_carbamltrans"/>
</dbReference>
<dbReference type="InterPro" id="IPR024904">
    <property type="entry name" value="OTCase_ArgI"/>
</dbReference>
<dbReference type="NCBIfam" id="TIGR00658">
    <property type="entry name" value="orni_carb_tr"/>
    <property type="match status" value="1"/>
</dbReference>
<dbReference type="NCBIfam" id="NF001986">
    <property type="entry name" value="PRK00779.1"/>
    <property type="match status" value="1"/>
</dbReference>
<dbReference type="NCBIfam" id="NF003286">
    <property type="entry name" value="PRK04284.1"/>
    <property type="match status" value="1"/>
</dbReference>
<dbReference type="NCBIfam" id="NF009213">
    <property type="entry name" value="PRK12562.1"/>
    <property type="match status" value="1"/>
</dbReference>
<dbReference type="PANTHER" id="PTHR45753:SF4">
    <property type="entry name" value="ORNITHINE CARBAMOYLTRANSFERASE SUBUNIT F-RELATED"/>
    <property type="match status" value="1"/>
</dbReference>
<dbReference type="PANTHER" id="PTHR45753">
    <property type="entry name" value="ORNITHINE CARBAMOYLTRANSFERASE, MITOCHONDRIAL"/>
    <property type="match status" value="1"/>
</dbReference>
<dbReference type="Pfam" id="PF00185">
    <property type="entry name" value="OTCace"/>
    <property type="match status" value="1"/>
</dbReference>
<dbReference type="Pfam" id="PF02729">
    <property type="entry name" value="OTCace_N"/>
    <property type="match status" value="1"/>
</dbReference>
<dbReference type="PRINTS" id="PR00100">
    <property type="entry name" value="AOTCASE"/>
</dbReference>
<dbReference type="PRINTS" id="PR00102">
    <property type="entry name" value="OTCASE"/>
</dbReference>
<dbReference type="SUPFAM" id="SSF53671">
    <property type="entry name" value="Aspartate/ornithine carbamoyltransferase"/>
    <property type="match status" value="1"/>
</dbReference>
<dbReference type="PROSITE" id="PS00097">
    <property type="entry name" value="CARBAMOYLTRANSFERASE"/>
    <property type="match status" value="1"/>
</dbReference>
<gene>
    <name evidence="2" type="primary">argI</name>
    <name type="ordered locus">YPTB0526</name>
</gene>
<feature type="chain" id="PRO_0000113060" description="Ornithine carbamoyltransferase">
    <location>
        <begin position="1"/>
        <end position="335"/>
    </location>
</feature>
<feature type="binding site" evidence="2">
    <location>
        <begin position="56"/>
        <end position="59"/>
    </location>
    <ligand>
        <name>carbamoyl phosphate</name>
        <dbReference type="ChEBI" id="CHEBI:58228"/>
    </ligand>
</feature>
<feature type="binding site" evidence="2">
    <location>
        <position position="83"/>
    </location>
    <ligand>
        <name>carbamoyl phosphate</name>
        <dbReference type="ChEBI" id="CHEBI:58228"/>
    </ligand>
</feature>
<feature type="binding site" evidence="2">
    <location>
        <position position="107"/>
    </location>
    <ligand>
        <name>carbamoyl phosphate</name>
        <dbReference type="ChEBI" id="CHEBI:58228"/>
    </ligand>
</feature>
<feature type="binding site" evidence="2">
    <location>
        <begin position="134"/>
        <end position="137"/>
    </location>
    <ligand>
        <name>carbamoyl phosphate</name>
        <dbReference type="ChEBI" id="CHEBI:58228"/>
    </ligand>
</feature>
<feature type="binding site" evidence="2">
    <location>
        <position position="168"/>
    </location>
    <ligand>
        <name>L-ornithine</name>
        <dbReference type="ChEBI" id="CHEBI:46911"/>
    </ligand>
</feature>
<feature type="binding site" evidence="2">
    <location>
        <position position="232"/>
    </location>
    <ligand>
        <name>L-ornithine</name>
        <dbReference type="ChEBI" id="CHEBI:46911"/>
    </ligand>
</feature>
<feature type="binding site" evidence="2">
    <location>
        <begin position="236"/>
        <end position="237"/>
    </location>
    <ligand>
        <name>L-ornithine</name>
        <dbReference type="ChEBI" id="CHEBI:46911"/>
    </ligand>
</feature>
<feature type="binding site" evidence="2">
    <location>
        <begin position="274"/>
        <end position="275"/>
    </location>
    <ligand>
        <name>carbamoyl phosphate</name>
        <dbReference type="ChEBI" id="CHEBI:58228"/>
    </ligand>
</feature>
<feature type="binding site" evidence="2">
    <location>
        <position position="320"/>
    </location>
    <ligand>
        <name>carbamoyl phosphate</name>
        <dbReference type="ChEBI" id="CHEBI:58228"/>
    </ligand>
</feature>
<reference key="1">
    <citation type="journal article" date="2004" name="Proc. Natl. Acad. Sci. U.S.A.">
        <title>Insights into the evolution of Yersinia pestis through whole-genome comparison with Yersinia pseudotuberculosis.</title>
        <authorList>
            <person name="Chain P.S.G."/>
            <person name="Carniel E."/>
            <person name="Larimer F.W."/>
            <person name="Lamerdin J."/>
            <person name="Stoutland P.O."/>
            <person name="Regala W.M."/>
            <person name="Georgescu A.M."/>
            <person name="Vergez L.M."/>
            <person name="Land M.L."/>
            <person name="Motin V.L."/>
            <person name="Brubaker R.R."/>
            <person name="Fowler J."/>
            <person name="Hinnebusch J."/>
            <person name="Marceau M."/>
            <person name="Medigue C."/>
            <person name="Simonet M."/>
            <person name="Chenal-Francisque V."/>
            <person name="Souza B."/>
            <person name="Dacheux D."/>
            <person name="Elliott J.M."/>
            <person name="Derbise A."/>
            <person name="Hauser L.J."/>
            <person name="Garcia E."/>
        </authorList>
    </citation>
    <scope>NUCLEOTIDE SEQUENCE [LARGE SCALE GENOMIC DNA]</scope>
    <source>
        <strain>IP32953</strain>
    </source>
</reference>
<accession>Q66F14</accession>
<comment type="function">
    <text evidence="1">Reversibly catalyzes the transfer of the carbamoyl group from carbamoyl phosphate (CP) to the N(epsilon) atom of ornithine (ORN) to produce L-citrulline.</text>
</comment>
<comment type="catalytic activity">
    <reaction evidence="2">
        <text>carbamoyl phosphate + L-ornithine = L-citrulline + phosphate + H(+)</text>
        <dbReference type="Rhea" id="RHEA:19513"/>
        <dbReference type="ChEBI" id="CHEBI:15378"/>
        <dbReference type="ChEBI" id="CHEBI:43474"/>
        <dbReference type="ChEBI" id="CHEBI:46911"/>
        <dbReference type="ChEBI" id="CHEBI:57743"/>
        <dbReference type="ChEBI" id="CHEBI:58228"/>
        <dbReference type="EC" id="2.1.3.3"/>
    </reaction>
</comment>
<comment type="pathway">
    <text evidence="2">Amino-acid biosynthesis; L-arginine biosynthesis; L-arginine from L-ornithine and carbamoyl phosphate: step 1/3.</text>
</comment>
<comment type="subcellular location">
    <subcellularLocation>
        <location evidence="2">Cytoplasm</location>
    </subcellularLocation>
</comment>
<comment type="similarity">
    <text evidence="2">Belongs to the aspartate/ornithine carbamoyltransferase superfamily. OTCase family.</text>
</comment>
<sequence length="335" mass="37464">MNQFYKRHFLRLLDFTPAEIIALLDLATELKKDKKSGCEQQKLVGKNIALIFEKDSTRTRCSFEVAAYDQGARVTYLGPGGSQIGHKESIKDTARVLGRMYDGIQYRGYGQRVVETLAEFAGVPVWNGLTNEFHPTQLLADLLTMREHLPNKSLNKMTLAYLGDTRNNMGNSLLEAAALVGMDLRLVAPKACWPEEAFVISCQALAQKTGGKITLTEDIAEGVNGADFLYTDVWVSMGEPKEVWQERITLLKPYQVNMRVLTLTGNPQVKFLHCLPAFHDDQTTIGKQMAEQYDLPGGMEVTEEVFESAHSIVFDQAENRLHTIKAVMVATMSKI</sequence>
<protein>
    <recommendedName>
        <fullName evidence="2">Ornithine carbamoyltransferase</fullName>
        <shortName evidence="2">OTCase</shortName>
        <ecNumber evidence="2">2.1.3.3</ecNumber>
    </recommendedName>
</protein>
<evidence type="ECO:0000250" key="1"/>
<evidence type="ECO:0000255" key="2">
    <source>
        <dbReference type="HAMAP-Rule" id="MF_01109"/>
    </source>
</evidence>
<name>OTC_YERPS</name>
<organism>
    <name type="scientific">Yersinia pseudotuberculosis serotype I (strain IP32953)</name>
    <dbReference type="NCBI Taxonomy" id="273123"/>
    <lineage>
        <taxon>Bacteria</taxon>
        <taxon>Pseudomonadati</taxon>
        <taxon>Pseudomonadota</taxon>
        <taxon>Gammaproteobacteria</taxon>
        <taxon>Enterobacterales</taxon>
        <taxon>Yersiniaceae</taxon>
        <taxon>Yersinia</taxon>
    </lineage>
</organism>